<feature type="chain" id="PRO_1000190696" description="4-diphosphocytidyl-2-C-methyl-D-erythritol kinase">
    <location>
        <begin position="1"/>
        <end position="296"/>
    </location>
</feature>
<feature type="active site" evidence="1">
    <location>
        <position position="14"/>
    </location>
</feature>
<feature type="active site" evidence="1">
    <location>
        <position position="139"/>
    </location>
</feature>
<feature type="binding site" evidence="1">
    <location>
        <begin position="97"/>
        <end position="107"/>
    </location>
    <ligand>
        <name>ATP</name>
        <dbReference type="ChEBI" id="CHEBI:30616"/>
    </ligand>
</feature>
<sequence length="296" mass="32519">MVNLDSLSLRSPAKLNLFLHIVGRRTDGYHLLQSVFQLIDWCDTLHLKRISENVVRRINPIPGVAPEHDLVVRAANLLKDFCQFEGGVEINLQKEIPMGAGMGGGSSDAATTLIGLNALWSLNLSKETLCALGLKLGADVPFFIFGKNAFVEGVGEKMREISLETPDFLVIFPNRGIATASIFQDPELTRDHAQITIDGFLTSPLLYQSNDCQAVAMRIYPEVKQALDWITQAVPGSQPRMSGSGSSVFAVLDSKTDIAKLKNFLQNLPKGWVGRVVRGLNKNPAYNLISFLQIDL</sequence>
<dbReference type="EC" id="2.7.1.148" evidence="1"/>
<dbReference type="EMBL" id="CP001010">
    <property type="protein sequence ID" value="ACB44698.1"/>
    <property type="molecule type" value="Genomic_DNA"/>
</dbReference>
<dbReference type="SMR" id="B1XS63"/>
<dbReference type="STRING" id="452638.Pnec_1624"/>
<dbReference type="KEGG" id="pne:Pnec_1624"/>
<dbReference type="eggNOG" id="COG1947">
    <property type="taxonomic scope" value="Bacteria"/>
</dbReference>
<dbReference type="HOGENOM" id="CLU_053057_3_0_4"/>
<dbReference type="OrthoDB" id="9809438at2"/>
<dbReference type="UniPathway" id="UPA00056">
    <property type="reaction ID" value="UER00094"/>
</dbReference>
<dbReference type="GO" id="GO:0050515">
    <property type="term" value="F:4-(cytidine 5'-diphospho)-2-C-methyl-D-erythritol kinase activity"/>
    <property type="evidence" value="ECO:0007669"/>
    <property type="project" value="UniProtKB-UniRule"/>
</dbReference>
<dbReference type="GO" id="GO:0005524">
    <property type="term" value="F:ATP binding"/>
    <property type="evidence" value="ECO:0007669"/>
    <property type="project" value="UniProtKB-UniRule"/>
</dbReference>
<dbReference type="GO" id="GO:0019288">
    <property type="term" value="P:isopentenyl diphosphate biosynthetic process, methylerythritol 4-phosphate pathway"/>
    <property type="evidence" value="ECO:0007669"/>
    <property type="project" value="UniProtKB-UniRule"/>
</dbReference>
<dbReference type="GO" id="GO:0016114">
    <property type="term" value="P:terpenoid biosynthetic process"/>
    <property type="evidence" value="ECO:0007669"/>
    <property type="project" value="InterPro"/>
</dbReference>
<dbReference type="Gene3D" id="3.30.230.10">
    <property type="match status" value="1"/>
</dbReference>
<dbReference type="Gene3D" id="3.30.70.890">
    <property type="entry name" value="GHMP kinase, C-terminal domain"/>
    <property type="match status" value="1"/>
</dbReference>
<dbReference type="HAMAP" id="MF_00061">
    <property type="entry name" value="IspE"/>
    <property type="match status" value="1"/>
</dbReference>
<dbReference type="InterPro" id="IPR013750">
    <property type="entry name" value="GHMP_kinase_C_dom"/>
</dbReference>
<dbReference type="InterPro" id="IPR036554">
    <property type="entry name" value="GHMP_kinase_C_sf"/>
</dbReference>
<dbReference type="InterPro" id="IPR006204">
    <property type="entry name" value="GHMP_kinase_N_dom"/>
</dbReference>
<dbReference type="InterPro" id="IPR004424">
    <property type="entry name" value="IspE"/>
</dbReference>
<dbReference type="InterPro" id="IPR020568">
    <property type="entry name" value="Ribosomal_Su5_D2-typ_SF"/>
</dbReference>
<dbReference type="InterPro" id="IPR014721">
    <property type="entry name" value="Ribsml_uS5_D2-typ_fold_subgr"/>
</dbReference>
<dbReference type="NCBIfam" id="TIGR00154">
    <property type="entry name" value="ispE"/>
    <property type="match status" value="1"/>
</dbReference>
<dbReference type="PANTHER" id="PTHR43527">
    <property type="entry name" value="4-DIPHOSPHOCYTIDYL-2-C-METHYL-D-ERYTHRITOL KINASE, CHLOROPLASTIC"/>
    <property type="match status" value="1"/>
</dbReference>
<dbReference type="PANTHER" id="PTHR43527:SF2">
    <property type="entry name" value="4-DIPHOSPHOCYTIDYL-2-C-METHYL-D-ERYTHRITOL KINASE, CHLOROPLASTIC"/>
    <property type="match status" value="1"/>
</dbReference>
<dbReference type="Pfam" id="PF08544">
    <property type="entry name" value="GHMP_kinases_C"/>
    <property type="match status" value="1"/>
</dbReference>
<dbReference type="Pfam" id="PF00288">
    <property type="entry name" value="GHMP_kinases_N"/>
    <property type="match status" value="1"/>
</dbReference>
<dbReference type="PIRSF" id="PIRSF010376">
    <property type="entry name" value="IspE"/>
    <property type="match status" value="1"/>
</dbReference>
<dbReference type="SUPFAM" id="SSF55060">
    <property type="entry name" value="GHMP Kinase, C-terminal domain"/>
    <property type="match status" value="1"/>
</dbReference>
<dbReference type="SUPFAM" id="SSF54211">
    <property type="entry name" value="Ribosomal protein S5 domain 2-like"/>
    <property type="match status" value="1"/>
</dbReference>
<proteinExistence type="inferred from homology"/>
<organism>
    <name type="scientific">Polynucleobacter necessarius subsp. necessarius (strain STIR1)</name>
    <dbReference type="NCBI Taxonomy" id="452638"/>
    <lineage>
        <taxon>Bacteria</taxon>
        <taxon>Pseudomonadati</taxon>
        <taxon>Pseudomonadota</taxon>
        <taxon>Betaproteobacteria</taxon>
        <taxon>Burkholderiales</taxon>
        <taxon>Burkholderiaceae</taxon>
        <taxon>Polynucleobacter</taxon>
    </lineage>
</organism>
<name>ISPE_POLNS</name>
<reference key="1">
    <citation type="journal article" date="2013" name="Proc. Natl. Acad. Sci. U.S.A.">
        <title>Polynucleobacter necessarius, a model for genome reduction in both free-living and symbiotic bacteria.</title>
        <authorList>
            <person name="Boscaro V."/>
            <person name="Felletti M."/>
            <person name="Vannini C."/>
            <person name="Ackerman M.S."/>
            <person name="Chain P.S."/>
            <person name="Malfatti S."/>
            <person name="Vergez L.M."/>
            <person name="Shin M."/>
            <person name="Doak T.G."/>
            <person name="Lynch M."/>
            <person name="Petroni G."/>
        </authorList>
    </citation>
    <scope>NUCLEOTIDE SEQUENCE [LARGE SCALE GENOMIC DNA]</scope>
    <source>
        <strain>STIR1</strain>
    </source>
</reference>
<evidence type="ECO:0000255" key="1">
    <source>
        <dbReference type="HAMAP-Rule" id="MF_00061"/>
    </source>
</evidence>
<protein>
    <recommendedName>
        <fullName evidence="1">4-diphosphocytidyl-2-C-methyl-D-erythritol kinase</fullName>
        <shortName evidence="1">CMK</shortName>
        <ecNumber evidence="1">2.7.1.148</ecNumber>
    </recommendedName>
    <alternativeName>
        <fullName evidence="1">4-(cytidine-5'-diphospho)-2-C-methyl-D-erythritol kinase</fullName>
    </alternativeName>
</protein>
<accession>B1XS63</accession>
<keyword id="KW-0067">ATP-binding</keyword>
<keyword id="KW-0414">Isoprene biosynthesis</keyword>
<keyword id="KW-0418">Kinase</keyword>
<keyword id="KW-0547">Nucleotide-binding</keyword>
<keyword id="KW-0808">Transferase</keyword>
<comment type="function">
    <text evidence="1">Catalyzes the phosphorylation of the position 2 hydroxy group of 4-diphosphocytidyl-2C-methyl-D-erythritol.</text>
</comment>
<comment type="catalytic activity">
    <reaction evidence="1">
        <text>4-CDP-2-C-methyl-D-erythritol + ATP = 4-CDP-2-C-methyl-D-erythritol 2-phosphate + ADP + H(+)</text>
        <dbReference type="Rhea" id="RHEA:18437"/>
        <dbReference type="ChEBI" id="CHEBI:15378"/>
        <dbReference type="ChEBI" id="CHEBI:30616"/>
        <dbReference type="ChEBI" id="CHEBI:57823"/>
        <dbReference type="ChEBI" id="CHEBI:57919"/>
        <dbReference type="ChEBI" id="CHEBI:456216"/>
        <dbReference type="EC" id="2.7.1.148"/>
    </reaction>
</comment>
<comment type="pathway">
    <text evidence="1">Isoprenoid biosynthesis; isopentenyl diphosphate biosynthesis via DXP pathway; isopentenyl diphosphate from 1-deoxy-D-xylulose 5-phosphate: step 3/6.</text>
</comment>
<comment type="similarity">
    <text evidence="1">Belongs to the GHMP kinase family. IspE subfamily.</text>
</comment>
<gene>
    <name evidence="1" type="primary">ispE</name>
    <name type="ordered locus">Pnec_1624</name>
</gene>